<proteinExistence type="inferred from homology"/>
<sequence>MLRNRNEGMSTIPEFSQIQFEGFCRFIDWGLAEELHKFPKIEDTDQEIEFQLFVETYQLAEPLIKERDAVYESLTYSSELYVPAGLIWKPGKDMQEQTVFIGNIPLMSSLGIFIVNGIYRIVINQILQSPGIYYRSELDHNGIFIYTGTIISDWGGRSELEIDRKARIWARVSRKQKISILVSSSAMGSNLREILENVRYPEIFLSFLNERDKKKIGSRENAILEFYQQFACVGGDPVFSESLCRELQKKFFQQRCELGRIGRRNMNRRLNLDIPQNNTFLLPRDVLAAADHLIGMKFGMGTLDDMNHLKNKRIRSVADLLQDQFGLALVRLENVVRGTICGAIRHKLIPTPQNLVTSTPLTTTYESFFGLHPLSQVLDRTNPLTQIVHGRKSSYLGPGGLTGRTASFRIRDIHTSHYGRICPIDTSEGINVGLIGSLAIHARVGPWGSIKTPFYEISERSKRLQLVYLSPSVDEYHMVAAGNSLALNRGIQEEQAVPARYRQEFLTIAWEQIHLRSIFPFQYFSMGASLIPFIEHNDANRALMSSNMQRQAVPLSRSEKCIVGTGLERQAALDSGVSAISEREGKVIYTNTDKIILSGNGDTITIPLVMYQRSNKNTCMHQKTQVSRGKCIKKGQILANGAATVGGELALGKNVLVAYMPWEGYNFEDAVLISERLVYEDIYTSFHIRKYEIQTHVTSQGPERITKEIPHLETHLLRNLDRNGIVMLGSWVETGDILVGKLTPQTAKESSYAPEDRLLRAILGIQVSTSKETCLKLPIGGRGRVIDVRWIQKKGGSSYNPETIRVYISQKREMKVGDKVAGRHGNKGIISKILPRQDMPYLQDGTPVDMVFNPLGVPSRMNVGQIFECSLGLAGDFLGRHYRVAPFDERYEQEASRKLVFSELYEASKQTANPWVFEPEYPGKSRIFDGRTGDPFDQPVLIGKSYILKLIHQVDDKIHGRSSGHYALVTQQPLRGRAKQGGQRVGEMEVWALEGFGVAHILQEMLTYKSDHIRSRQEVLGTTIVGGTIANPGDAPESFRLLVRELRSLALELNHFLLSEKDFQIHRKEA</sequence>
<name>RPOB_PIPCE</name>
<comment type="function">
    <text evidence="1">DNA-dependent RNA polymerase catalyzes the transcription of DNA into RNA using the four ribonucleoside triphosphates as substrates.</text>
</comment>
<comment type="catalytic activity">
    <reaction evidence="1">
        <text>RNA(n) + a ribonucleoside 5'-triphosphate = RNA(n+1) + diphosphate</text>
        <dbReference type="Rhea" id="RHEA:21248"/>
        <dbReference type="Rhea" id="RHEA-COMP:14527"/>
        <dbReference type="Rhea" id="RHEA-COMP:17342"/>
        <dbReference type="ChEBI" id="CHEBI:33019"/>
        <dbReference type="ChEBI" id="CHEBI:61557"/>
        <dbReference type="ChEBI" id="CHEBI:140395"/>
        <dbReference type="EC" id="2.7.7.6"/>
    </reaction>
</comment>
<comment type="subunit">
    <text evidence="1">In plastids the minimal PEP RNA polymerase catalytic core is composed of four subunits: alpha, beta, beta', and beta''. When a (nuclear-encoded) sigma factor is associated with the core the holoenzyme is formed, which can initiate transcription.</text>
</comment>
<comment type="subcellular location">
    <subcellularLocation>
        <location>Plastid</location>
        <location>Chloroplast</location>
    </subcellularLocation>
</comment>
<comment type="similarity">
    <text evidence="1">Belongs to the RNA polymerase beta chain family.</text>
</comment>
<evidence type="ECO:0000255" key="1">
    <source>
        <dbReference type="HAMAP-Rule" id="MF_01321"/>
    </source>
</evidence>
<dbReference type="EC" id="2.7.7.6" evidence="1"/>
<dbReference type="EMBL" id="DQ887677">
    <property type="protein sequence ID" value="ABI14464.1"/>
    <property type="molecule type" value="Genomic_DNA"/>
</dbReference>
<dbReference type="RefSeq" id="YP_784465.1">
    <property type="nucleotide sequence ID" value="NC_008457.1"/>
</dbReference>
<dbReference type="SMR" id="Q06GR8"/>
<dbReference type="GeneID" id="4363713"/>
<dbReference type="GO" id="GO:0009507">
    <property type="term" value="C:chloroplast"/>
    <property type="evidence" value="ECO:0007669"/>
    <property type="project" value="UniProtKB-SubCell"/>
</dbReference>
<dbReference type="GO" id="GO:0000428">
    <property type="term" value="C:DNA-directed RNA polymerase complex"/>
    <property type="evidence" value="ECO:0007669"/>
    <property type="project" value="UniProtKB-KW"/>
</dbReference>
<dbReference type="GO" id="GO:0005739">
    <property type="term" value="C:mitochondrion"/>
    <property type="evidence" value="ECO:0007669"/>
    <property type="project" value="GOC"/>
</dbReference>
<dbReference type="GO" id="GO:0003677">
    <property type="term" value="F:DNA binding"/>
    <property type="evidence" value="ECO:0007669"/>
    <property type="project" value="UniProtKB-UniRule"/>
</dbReference>
<dbReference type="GO" id="GO:0003899">
    <property type="term" value="F:DNA-directed RNA polymerase activity"/>
    <property type="evidence" value="ECO:0007669"/>
    <property type="project" value="UniProtKB-UniRule"/>
</dbReference>
<dbReference type="GO" id="GO:0032549">
    <property type="term" value="F:ribonucleoside binding"/>
    <property type="evidence" value="ECO:0007669"/>
    <property type="project" value="InterPro"/>
</dbReference>
<dbReference type="GO" id="GO:0006351">
    <property type="term" value="P:DNA-templated transcription"/>
    <property type="evidence" value="ECO:0007669"/>
    <property type="project" value="UniProtKB-UniRule"/>
</dbReference>
<dbReference type="CDD" id="cd00653">
    <property type="entry name" value="RNA_pol_B_RPB2"/>
    <property type="match status" value="1"/>
</dbReference>
<dbReference type="FunFam" id="3.90.1110.10:FF:000009">
    <property type="entry name" value="DNA-directed RNA polymerase subunit beta"/>
    <property type="match status" value="1"/>
</dbReference>
<dbReference type="Gene3D" id="2.40.50.100">
    <property type="match status" value="1"/>
</dbReference>
<dbReference type="Gene3D" id="2.40.50.150">
    <property type="match status" value="1"/>
</dbReference>
<dbReference type="Gene3D" id="3.90.1100.10">
    <property type="match status" value="1"/>
</dbReference>
<dbReference type="Gene3D" id="2.30.150.10">
    <property type="entry name" value="DNA-directed RNA polymerase, beta subunit, external 1 domain"/>
    <property type="match status" value="1"/>
</dbReference>
<dbReference type="Gene3D" id="2.40.270.10">
    <property type="entry name" value="DNA-directed RNA polymerase, subunit 2, domain 6"/>
    <property type="match status" value="2"/>
</dbReference>
<dbReference type="Gene3D" id="3.90.1800.10">
    <property type="entry name" value="RNA polymerase alpha subunit dimerisation domain"/>
    <property type="match status" value="1"/>
</dbReference>
<dbReference type="Gene3D" id="3.90.1110.10">
    <property type="entry name" value="RNA polymerase Rpb2, domain 2"/>
    <property type="match status" value="1"/>
</dbReference>
<dbReference type="HAMAP" id="MF_01321">
    <property type="entry name" value="RNApol_bact_RpoB"/>
    <property type="match status" value="1"/>
</dbReference>
<dbReference type="InterPro" id="IPR042107">
    <property type="entry name" value="DNA-dir_RNA_pol_bsu_ext_1_sf"/>
</dbReference>
<dbReference type="InterPro" id="IPR015712">
    <property type="entry name" value="DNA-dir_RNA_pol_su2"/>
</dbReference>
<dbReference type="InterPro" id="IPR007120">
    <property type="entry name" value="DNA-dir_RNAP_su2_dom"/>
</dbReference>
<dbReference type="InterPro" id="IPR037033">
    <property type="entry name" value="DNA-dir_RNAP_su2_hyb_sf"/>
</dbReference>
<dbReference type="InterPro" id="IPR010243">
    <property type="entry name" value="RNA_pol_bsu_bac"/>
</dbReference>
<dbReference type="InterPro" id="IPR007121">
    <property type="entry name" value="RNA_pol_bsu_CS"/>
</dbReference>
<dbReference type="InterPro" id="IPR007644">
    <property type="entry name" value="RNA_pol_bsu_protrusion"/>
</dbReference>
<dbReference type="InterPro" id="IPR007642">
    <property type="entry name" value="RNA_pol_Rpb2_2"/>
</dbReference>
<dbReference type="InterPro" id="IPR037034">
    <property type="entry name" value="RNA_pol_Rpb2_2_sf"/>
</dbReference>
<dbReference type="InterPro" id="IPR007645">
    <property type="entry name" value="RNA_pol_Rpb2_3"/>
</dbReference>
<dbReference type="InterPro" id="IPR007641">
    <property type="entry name" value="RNA_pol_Rpb2_7"/>
</dbReference>
<dbReference type="InterPro" id="IPR014724">
    <property type="entry name" value="RNA_pol_RPB2_OB-fold"/>
</dbReference>
<dbReference type="NCBIfam" id="NF001616">
    <property type="entry name" value="PRK00405.1"/>
    <property type="match status" value="1"/>
</dbReference>
<dbReference type="PANTHER" id="PTHR20856">
    <property type="entry name" value="DNA-DIRECTED RNA POLYMERASE I SUBUNIT 2"/>
    <property type="match status" value="1"/>
</dbReference>
<dbReference type="Pfam" id="PF04563">
    <property type="entry name" value="RNA_pol_Rpb2_1"/>
    <property type="match status" value="1"/>
</dbReference>
<dbReference type="Pfam" id="PF04561">
    <property type="entry name" value="RNA_pol_Rpb2_2"/>
    <property type="match status" value="1"/>
</dbReference>
<dbReference type="Pfam" id="PF04565">
    <property type="entry name" value="RNA_pol_Rpb2_3"/>
    <property type="match status" value="1"/>
</dbReference>
<dbReference type="Pfam" id="PF00562">
    <property type="entry name" value="RNA_pol_Rpb2_6"/>
    <property type="match status" value="1"/>
</dbReference>
<dbReference type="Pfam" id="PF04560">
    <property type="entry name" value="RNA_pol_Rpb2_7"/>
    <property type="match status" value="1"/>
</dbReference>
<dbReference type="SUPFAM" id="SSF64484">
    <property type="entry name" value="beta and beta-prime subunits of DNA dependent RNA-polymerase"/>
    <property type="match status" value="1"/>
</dbReference>
<dbReference type="PROSITE" id="PS01166">
    <property type="entry name" value="RNA_POL_BETA"/>
    <property type="match status" value="1"/>
</dbReference>
<feature type="chain" id="PRO_0000276595" description="DNA-directed RNA polymerase subunit beta">
    <location>
        <begin position="1"/>
        <end position="1070"/>
    </location>
</feature>
<geneLocation type="chloroplast"/>
<accession>Q06GR8</accession>
<organism>
    <name type="scientific">Piper cenocladum</name>
    <name type="common">Ant piper</name>
    <dbReference type="NCBI Taxonomy" id="398741"/>
    <lineage>
        <taxon>Eukaryota</taxon>
        <taxon>Viridiplantae</taxon>
        <taxon>Streptophyta</taxon>
        <taxon>Embryophyta</taxon>
        <taxon>Tracheophyta</taxon>
        <taxon>Spermatophyta</taxon>
        <taxon>Magnoliopsida</taxon>
        <taxon>Magnoliidae</taxon>
        <taxon>Piperales</taxon>
        <taxon>Piperaceae</taxon>
        <taxon>Piper</taxon>
    </lineage>
</organism>
<protein>
    <recommendedName>
        <fullName evidence="1">DNA-directed RNA polymerase subunit beta</fullName>
        <ecNumber evidence="1">2.7.7.6</ecNumber>
    </recommendedName>
    <alternativeName>
        <fullName evidence="1">PEP</fullName>
    </alternativeName>
    <alternativeName>
        <fullName evidence="1">Plastid-encoded RNA polymerase subunit beta</fullName>
        <shortName evidence="1">RNA polymerase subunit beta</shortName>
    </alternativeName>
</protein>
<reference key="1">
    <citation type="journal article" date="2006" name="BMC Evol. Biol.">
        <title>Complete plastid genome sequences of Drimys, Liriodendron, and Piper: implications for the phylogenetic relationships of magnoliids.</title>
        <authorList>
            <person name="Cai Z."/>
            <person name="Penaflor C."/>
            <person name="Kuehl J.V."/>
            <person name="Leebens-Mack J."/>
            <person name="Carlson J.E."/>
            <person name="dePamphilis C.W."/>
            <person name="Boore J.L."/>
            <person name="Jansen R.K."/>
        </authorList>
    </citation>
    <scope>NUCLEOTIDE SEQUENCE [LARGE SCALE GENOMIC DNA]</scope>
</reference>
<gene>
    <name evidence="1" type="primary">rpoB</name>
</gene>
<keyword id="KW-0150">Chloroplast</keyword>
<keyword id="KW-0240">DNA-directed RNA polymerase</keyword>
<keyword id="KW-0548">Nucleotidyltransferase</keyword>
<keyword id="KW-0934">Plastid</keyword>
<keyword id="KW-0804">Transcription</keyword>
<keyword id="KW-0808">Transferase</keyword>